<keyword id="KW-0963">Cytoplasm</keyword>
<keyword id="KW-0690">Ribosome biogenesis</keyword>
<name>RIMP_BACAC</name>
<protein>
    <recommendedName>
        <fullName evidence="1">Ribosome maturation factor RimP</fullName>
    </recommendedName>
</protein>
<sequence>MDKKVTEVVEAFAQPIVEELNLELVDVEYVKEGQDWFLRVFIDSEKGVDIEECGAVSERLSEALDKEDPIPHLYFLDVSSPGAERPLKKEKDFQQAVGKQVAIKTYEPIDGEKMFEGKMLSYDGTTITLLLTIKTRKKEIQIPMDKVANARLAVTF</sequence>
<evidence type="ECO:0000255" key="1">
    <source>
        <dbReference type="HAMAP-Rule" id="MF_01077"/>
    </source>
</evidence>
<reference key="1">
    <citation type="submission" date="2008-10" db="EMBL/GenBank/DDBJ databases">
        <title>Genome sequence of Bacillus anthracis str. CDC 684.</title>
        <authorList>
            <person name="Dodson R.J."/>
            <person name="Munk A.C."/>
            <person name="Brettin T."/>
            <person name="Bruce D."/>
            <person name="Detter C."/>
            <person name="Tapia R."/>
            <person name="Han C."/>
            <person name="Sutton G."/>
            <person name="Sims D."/>
        </authorList>
    </citation>
    <scope>NUCLEOTIDE SEQUENCE [LARGE SCALE GENOMIC DNA]</scope>
    <source>
        <strain>CDC 684 / NRRL 3495</strain>
    </source>
</reference>
<feature type="chain" id="PRO_1000149779" description="Ribosome maturation factor RimP">
    <location>
        <begin position="1"/>
        <end position="156"/>
    </location>
</feature>
<proteinExistence type="inferred from homology"/>
<dbReference type="EMBL" id="CP001215">
    <property type="protein sequence ID" value="ACP15028.1"/>
    <property type="molecule type" value="Genomic_DNA"/>
</dbReference>
<dbReference type="RefSeq" id="WP_000359097.1">
    <property type="nucleotide sequence ID" value="NC_012581.1"/>
</dbReference>
<dbReference type="SMR" id="C3L7B0"/>
<dbReference type="GeneID" id="93007295"/>
<dbReference type="KEGG" id="bah:BAMEG_0677"/>
<dbReference type="HOGENOM" id="CLU_070525_2_0_9"/>
<dbReference type="GO" id="GO:0005829">
    <property type="term" value="C:cytosol"/>
    <property type="evidence" value="ECO:0007669"/>
    <property type="project" value="TreeGrafter"/>
</dbReference>
<dbReference type="GO" id="GO:0000028">
    <property type="term" value="P:ribosomal small subunit assembly"/>
    <property type="evidence" value="ECO:0007669"/>
    <property type="project" value="TreeGrafter"/>
</dbReference>
<dbReference type="GO" id="GO:0006412">
    <property type="term" value="P:translation"/>
    <property type="evidence" value="ECO:0007669"/>
    <property type="project" value="TreeGrafter"/>
</dbReference>
<dbReference type="CDD" id="cd01734">
    <property type="entry name" value="YlxS_C"/>
    <property type="match status" value="1"/>
</dbReference>
<dbReference type="FunFam" id="2.30.30.180:FF:000002">
    <property type="entry name" value="Ribosome maturation factor RimP"/>
    <property type="match status" value="1"/>
</dbReference>
<dbReference type="FunFam" id="3.30.300.70:FF:000001">
    <property type="entry name" value="Ribosome maturation factor RimP"/>
    <property type="match status" value="1"/>
</dbReference>
<dbReference type="Gene3D" id="2.30.30.180">
    <property type="entry name" value="Ribosome maturation factor RimP, C-terminal domain"/>
    <property type="match status" value="1"/>
</dbReference>
<dbReference type="Gene3D" id="3.30.300.70">
    <property type="entry name" value="RimP-like superfamily, N-terminal"/>
    <property type="match status" value="1"/>
</dbReference>
<dbReference type="HAMAP" id="MF_01077">
    <property type="entry name" value="RimP"/>
    <property type="match status" value="1"/>
</dbReference>
<dbReference type="InterPro" id="IPR003728">
    <property type="entry name" value="Ribosome_maturation_RimP"/>
</dbReference>
<dbReference type="InterPro" id="IPR028998">
    <property type="entry name" value="RimP_C"/>
</dbReference>
<dbReference type="InterPro" id="IPR036847">
    <property type="entry name" value="RimP_C_sf"/>
</dbReference>
<dbReference type="InterPro" id="IPR028989">
    <property type="entry name" value="RimP_N"/>
</dbReference>
<dbReference type="InterPro" id="IPR035956">
    <property type="entry name" value="RimP_N_sf"/>
</dbReference>
<dbReference type="NCBIfam" id="NF000928">
    <property type="entry name" value="PRK00092.1-2"/>
    <property type="match status" value="1"/>
</dbReference>
<dbReference type="PANTHER" id="PTHR33867">
    <property type="entry name" value="RIBOSOME MATURATION FACTOR RIMP"/>
    <property type="match status" value="1"/>
</dbReference>
<dbReference type="PANTHER" id="PTHR33867:SF1">
    <property type="entry name" value="RIBOSOME MATURATION FACTOR RIMP"/>
    <property type="match status" value="1"/>
</dbReference>
<dbReference type="Pfam" id="PF17384">
    <property type="entry name" value="DUF150_C"/>
    <property type="match status" value="1"/>
</dbReference>
<dbReference type="Pfam" id="PF02576">
    <property type="entry name" value="RimP_N"/>
    <property type="match status" value="1"/>
</dbReference>
<dbReference type="SUPFAM" id="SSF74942">
    <property type="entry name" value="YhbC-like, C-terminal domain"/>
    <property type="match status" value="1"/>
</dbReference>
<dbReference type="SUPFAM" id="SSF75420">
    <property type="entry name" value="YhbC-like, N-terminal domain"/>
    <property type="match status" value="1"/>
</dbReference>
<gene>
    <name evidence="1" type="primary">rimP</name>
    <name type="ordered locus">BAMEG_0677</name>
</gene>
<organism>
    <name type="scientific">Bacillus anthracis (strain CDC 684 / NRRL 3495)</name>
    <dbReference type="NCBI Taxonomy" id="568206"/>
    <lineage>
        <taxon>Bacteria</taxon>
        <taxon>Bacillati</taxon>
        <taxon>Bacillota</taxon>
        <taxon>Bacilli</taxon>
        <taxon>Bacillales</taxon>
        <taxon>Bacillaceae</taxon>
        <taxon>Bacillus</taxon>
        <taxon>Bacillus cereus group</taxon>
    </lineage>
</organism>
<accession>C3L7B0</accession>
<comment type="function">
    <text evidence="1">Required for maturation of 30S ribosomal subunits.</text>
</comment>
<comment type="subcellular location">
    <subcellularLocation>
        <location evidence="1">Cytoplasm</location>
    </subcellularLocation>
</comment>
<comment type="similarity">
    <text evidence="1">Belongs to the RimP family.</text>
</comment>